<gene>
    <name evidence="1" type="primary">hemA</name>
    <name type="ordered locus">jhp_0224</name>
</gene>
<comment type="function">
    <text evidence="1">Catalyzes the NADPH-dependent reduction of glutamyl-tRNA(Glu) to glutamate 1-semialdehyde (GSA).</text>
</comment>
<comment type="catalytic activity">
    <reaction evidence="1">
        <text>(S)-4-amino-5-oxopentanoate + tRNA(Glu) + NADP(+) = L-glutamyl-tRNA(Glu) + NADPH + H(+)</text>
        <dbReference type="Rhea" id="RHEA:12344"/>
        <dbReference type="Rhea" id="RHEA-COMP:9663"/>
        <dbReference type="Rhea" id="RHEA-COMP:9680"/>
        <dbReference type="ChEBI" id="CHEBI:15378"/>
        <dbReference type="ChEBI" id="CHEBI:57501"/>
        <dbReference type="ChEBI" id="CHEBI:57783"/>
        <dbReference type="ChEBI" id="CHEBI:58349"/>
        <dbReference type="ChEBI" id="CHEBI:78442"/>
        <dbReference type="ChEBI" id="CHEBI:78520"/>
        <dbReference type="EC" id="1.2.1.70"/>
    </reaction>
</comment>
<comment type="pathway">
    <text evidence="1">Porphyrin-containing compound metabolism; protoporphyrin-IX biosynthesis; 5-aminolevulinate from L-glutamyl-tRNA(Glu): step 1/2.</text>
</comment>
<comment type="subunit">
    <text evidence="1">Homodimer.</text>
</comment>
<comment type="domain">
    <text evidence="1">Possesses an unusual extended V-shaped dimeric structure with each monomer consisting of three distinct domains arranged along a curved 'spinal' alpha-helix. The N-terminal catalytic domain specifically recognizes the glutamate moiety of the substrate. The second domain is the NADPH-binding domain, and the third C-terminal domain is responsible for dimerization.</text>
</comment>
<comment type="miscellaneous">
    <text evidence="1">During catalysis, the active site Cys acts as a nucleophile attacking the alpha-carbonyl group of tRNA-bound glutamate with the formation of a thioester intermediate between enzyme and glutamate, and the concomitant release of tRNA(Glu). The thioester intermediate is finally reduced by direct hydride transfer from NADPH, to form the product GSA.</text>
</comment>
<comment type="similarity">
    <text evidence="1">Belongs to the glutamyl-tRNA reductase family.</text>
</comment>
<organism>
    <name type="scientific">Helicobacter pylori (strain J99 / ATCC 700824)</name>
    <name type="common">Campylobacter pylori J99</name>
    <dbReference type="NCBI Taxonomy" id="85963"/>
    <lineage>
        <taxon>Bacteria</taxon>
        <taxon>Pseudomonadati</taxon>
        <taxon>Campylobacterota</taxon>
        <taxon>Epsilonproteobacteria</taxon>
        <taxon>Campylobacterales</taxon>
        <taxon>Helicobacteraceae</taxon>
        <taxon>Helicobacter</taxon>
    </lineage>
</organism>
<proteinExistence type="inferred from homology"/>
<protein>
    <recommendedName>
        <fullName evidence="1">Glutamyl-tRNA reductase</fullName>
        <shortName evidence="1">GluTR</shortName>
        <ecNumber evidence="1">1.2.1.70</ecNumber>
    </recommendedName>
</protein>
<accession>Q9ZMJ5</accession>
<sequence length="449" mass="51613">MELETHLSKYFTLAFTHKSMSLEMREKLAINSPIMLKELLQTIKTHCPNIKECMVLSTCNRFEIYASLKHGANTHEQKSALLKILAQNKKMSVSDLEKCVLINTDESAVHHVFSVCSSLDSLVVGETQITGQMKNAYKFAFEEKFCSKDLTRLLHFAFKCAAKVRNLTGISKQGVSISSVAVKEALSIFEKERIKDKKALVIGLGEMAQLVIKHLLNKQFEVLILGRNAAKFEDFVKELEEPKKVGFQNVENLNAYINEYELLFCATSSPNFIVRNSMLKETIFRRFWFDLAVPRNIEKPTLNHIFLYSVDDLEPMVKENVGNRQESRTKAYEIVGLATMEFYQWIQSLEVEPLIKDLRELARISAQKELQKALKKRYVPKEYEGNIEKILHNAFNTFLHHPTIALKKNAQKEESDVLVGAIKNLFNLDKSNANHAQNLNLYKCEYYEE</sequence>
<dbReference type="EC" id="1.2.1.70" evidence="1"/>
<dbReference type="EMBL" id="AE001439">
    <property type="protein sequence ID" value="AAD05796.1"/>
    <property type="molecule type" value="Genomic_DNA"/>
</dbReference>
<dbReference type="PIR" id="C71959">
    <property type="entry name" value="C71959"/>
</dbReference>
<dbReference type="RefSeq" id="WP_000418347.1">
    <property type="nucleotide sequence ID" value="NC_000921.1"/>
</dbReference>
<dbReference type="SMR" id="Q9ZMJ5"/>
<dbReference type="KEGG" id="hpj:jhp_0224"/>
<dbReference type="PATRIC" id="fig|85963.30.peg.790"/>
<dbReference type="eggNOG" id="COG0373">
    <property type="taxonomic scope" value="Bacteria"/>
</dbReference>
<dbReference type="UniPathway" id="UPA00251">
    <property type="reaction ID" value="UER00316"/>
</dbReference>
<dbReference type="Proteomes" id="UP000000804">
    <property type="component" value="Chromosome"/>
</dbReference>
<dbReference type="GO" id="GO:0008883">
    <property type="term" value="F:glutamyl-tRNA reductase activity"/>
    <property type="evidence" value="ECO:0007669"/>
    <property type="project" value="UniProtKB-UniRule"/>
</dbReference>
<dbReference type="GO" id="GO:0050661">
    <property type="term" value="F:NADP binding"/>
    <property type="evidence" value="ECO:0007669"/>
    <property type="project" value="InterPro"/>
</dbReference>
<dbReference type="GO" id="GO:0006782">
    <property type="term" value="P:protoporphyrinogen IX biosynthetic process"/>
    <property type="evidence" value="ECO:0007669"/>
    <property type="project" value="UniProtKB-UniRule"/>
</dbReference>
<dbReference type="CDD" id="cd05213">
    <property type="entry name" value="NAD_bind_Glutamyl_tRNA_reduct"/>
    <property type="match status" value="1"/>
</dbReference>
<dbReference type="FunFam" id="3.30.460.30:FF:000001">
    <property type="entry name" value="Glutamyl-tRNA reductase"/>
    <property type="match status" value="1"/>
</dbReference>
<dbReference type="Gene3D" id="3.30.460.30">
    <property type="entry name" value="Glutamyl-tRNA reductase, N-terminal domain"/>
    <property type="match status" value="1"/>
</dbReference>
<dbReference type="Gene3D" id="3.40.50.720">
    <property type="entry name" value="NAD(P)-binding Rossmann-like Domain"/>
    <property type="match status" value="1"/>
</dbReference>
<dbReference type="HAMAP" id="MF_00087">
    <property type="entry name" value="Glu_tRNA_reductase"/>
    <property type="match status" value="1"/>
</dbReference>
<dbReference type="InterPro" id="IPR000343">
    <property type="entry name" value="4pyrrol_synth_GluRdtase"/>
</dbReference>
<dbReference type="InterPro" id="IPR015896">
    <property type="entry name" value="4pyrrol_synth_GluRdtase_dimer"/>
</dbReference>
<dbReference type="InterPro" id="IPR015895">
    <property type="entry name" value="4pyrrol_synth_GluRdtase_N"/>
</dbReference>
<dbReference type="InterPro" id="IPR018214">
    <property type="entry name" value="GluRdtase_CS"/>
</dbReference>
<dbReference type="InterPro" id="IPR036453">
    <property type="entry name" value="GluRdtase_dimer_dom_sf"/>
</dbReference>
<dbReference type="InterPro" id="IPR036343">
    <property type="entry name" value="GluRdtase_N_sf"/>
</dbReference>
<dbReference type="InterPro" id="IPR036291">
    <property type="entry name" value="NAD(P)-bd_dom_sf"/>
</dbReference>
<dbReference type="InterPro" id="IPR006151">
    <property type="entry name" value="Shikm_DH/Glu-tRNA_Rdtase"/>
</dbReference>
<dbReference type="NCBIfam" id="TIGR01035">
    <property type="entry name" value="hemA"/>
    <property type="match status" value="1"/>
</dbReference>
<dbReference type="PANTHER" id="PTHR43120">
    <property type="entry name" value="GLUTAMYL-TRNA REDUCTASE 1, CHLOROPLASTIC"/>
    <property type="match status" value="1"/>
</dbReference>
<dbReference type="PANTHER" id="PTHR43120:SF1">
    <property type="entry name" value="GLUTAMYL-TRNA REDUCTASE 1, CHLOROPLASTIC"/>
    <property type="match status" value="1"/>
</dbReference>
<dbReference type="Pfam" id="PF00745">
    <property type="entry name" value="GlutR_dimer"/>
    <property type="match status" value="1"/>
</dbReference>
<dbReference type="Pfam" id="PF05201">
    <property type="entry name" value="GlutR_N"/>
    <property type="match status" value="1"/>
</dbReference>
<dbReference type="Pfam" id="PF01488">
    <property type="entry name" value="Shikimate_DH"/>
    <property type="match status" value="1"/>
</dbReference>
<dbReference type="PIRSF" id="PIRSF000445">
    <property type="entry name" value="4pyrrol_synth_GluRdtase"/>
    <property type="match status" value="1"/>
</dbReference>
<dbReference type="SUPFAM" id="SSF69742">
    <property type="entry name" value="Glutamyl tRNA-reductase catalytic, N-terminal domain"/>
    <property type="match status" value="1"/>
</dbReference>
<dbReference type="SUPFAM" id="SSF69075">
    <property type="entry name" value="Glutamyl tRNA-reductase dimerization domain"/>
    <property type="match status" value="1"/>
</dbReference>
<dbReference type="SUPFAM" id="SSF51735">
    <property type="entry name" value="NAD(P)-binding Rossmann-fold domains"/>
    <property type="match status" value="1"/>
</dbReference>
<dbReference type="PROSITE" id="PS00747">
    <property type="entry name" value="GLUTR"/>
    <property type="match status" value="1"/>
</dbReference>
<feature type="chain" id="PRO_0000114033" description="Glutamyl-tRNA reductase">
    <location>
        <begin position="1"/>
        <end position="449"/>
    </location>
</feature>
<feature type="active site" description="Nucleophile" evidence="1">
    <location>
        <position position="59"/>
    </location>
</feature>
<feature type="binding site" evidence="1">
    <location>
        <begin position="58"/>
        <end position="61"/>
    </location>
    <ligand>
        <name>substrate</name>
    </ligand>
</feature>
<feature type="binding site" evidence="1">
    <location>
        <position position="121"/>
    </location>
    <ligand>
        <name>substrate</name>
    </ligand>
</feature>
<feature type="binding site" evidence="1">
    <location>
        <begin position="126"/>
        <end position="128"/>
    </location>
    <ligand>
        <name>substrate</name>
    </ligand>
</feature>
<feature type="binding site" evidence="1">
    <location>
        <position position="132"/>
    </location>
    <ligand>
        <name>substrate</name>
    </ligand>
</feature>
<feature type="binding site" evidence="1">
    <location>
        <begin position="203"/>
        <end position="208"/>
    </location>
    <ligand>
        <name>NADP(+)</name>
        <dbReference type="ChEBI" id="CHEBI:58349"/>
    </ligand>
</feature>
<feature type="site" description="Important for activity" evidence="1">
    <location>
        <position position="111"/>
    </location>
</feature>
<name>HEM1_HELPJ</name>
<keyword id="KW-0521">NADP</keyword>
<keyword id="KW-0560">Oxidoreductase</keyword>
<keyword id="KW-0627">Porphyrin biosynthesis</keyword>
<reference key="1">
    <citation type="journal article" date="1999" name="Nature">
        <title>Genomic sequence comparison of two unrelated isolates of the human gastric pathogen Helicobacter pylori.</title>
        <authorList>
            <person name="Alm R.A."/>
            <person name="Ling L.-S.L."/>
            <person name="Moir D.T."/>
            <person name="King B.L."/>
            <person name="Brown E.D."/>
            <person name="Doig P.C."/>
            <person name="Smith D.R."/>
            <person name="Noonan B."/>
            <person name="Guild B.C."/>
            <person name="deJonge B.L."/>
            <person name="Carmel G."/>
            <person name="Tummino P.J."/>
            <person name="Caruso A."/>
            <person name="Uria-Nickelsen M."/>
            <person name="Mills D.M."/>
            <person name="Ives C."/>
            <person name="Gibson R."/>
            <person name="Merberg D."/>
            <person name="Mills S.D."/>
            <person name="Jiang Q."/>
            <person name="Taylor D.E."/>
            <person name="Vovis G.F."/>
            <person name="Trust T.J."/>
        </authorList>
    </citation>
    <scope>NUCLEOTIDE SEQUENCE [LARGE SCALE GENOMIC DNA]</scope>
    <source>
        <strain>J99 / ATCC 700824</strain>
    </source>
</reference>
<evidence type="ECO:0000255" key="1">
    <source>
        <dbReference type="HAMAP-Rule" id="MF_00087"/>
    </source>
</evidence>